<dbReference type="EMBL" id="AJ749949">
    <property type="protein sequence ID" value="CAG44961.1"/>
    <property type="molecule type" value="Genomic_DNA"/>
</dbReference>
<dbReference type="RefSeq" id="WP_003027197.1">
    <property type="nucleotide sequence ID" value="NZ_CP010290.1"/>
</dbReference>
<dbReference type="RefSeq" id="YP_169377.1">
    <property type="nucleotide sequence ID" value="NC_006570.2"/>
</dbReference>
<dbReference type="SMR" id="Q5NHW5"/>
<dbReference type="STRING" id="177416.FTT_0328"/>
<dbReference type="DNASU" id="3192022"/>
<dbReference type="EnsemblBacteria" id="CAG44961">
    <property type="protein sequence ID" value="CAG44961"/>
    <property type="gene ID" value="FTT_0328"/>
</dbReference>
<dbReference type="GeneID" id="75264258"/>
<dbReference type="KEGG" id="ftu:FTT_0328"/>
<dbReference type="eggNOG" id="COG0090">
    <property type="taxonomic scope" value="Bacteria"/>
</dbReference>
<dbReference type="OrthoDB" id="9778722at2"/>
<dbReference type="Proteomes" id="UP000001174">
    <property type="component" value="Chromosome"/>
</dbReference>
<dbReference type="GO" id="GO:0015934">
    <property type="term" value="C:large ribosomal subunit"/>
    <property type="evidence" value="ECO:0007669"/>
    <property type="project" value="InterPro"/>
</dbReference>
<dbReference type="GO" id="GO:0019843">
    <property type="term" value="F:rRNA binding"/>
    <property type="evidence" value="ECO:0007669"/>
    <property type="project" value="UniProtKB-UniRule"/>
</dbReference>
<dbReference type="GO" id="GO:0003735">
    <property type="term" value="F:structural constituent of ribosome"/>
    <property type="evidence" value="ECO:0007669"/>
    <property type="project" value="InterPro"/>
</dbReference>
<dbReference type="GO" id="GO:0016740">
    <property type="term" value="F:transferase activity"/>
    <property type="evidence" value="ECO:0007669"/>
    <property type="project" value="InterPro"/>
</dbReference>
<dbReference type="GO" id="GO:0002181">
    <property type="term" value="P:cytoplasmic translation"/>
    <property type="evidence" value="ECO:0007669"/>
    <property type="project" value="TreeGrafter"/>
</dbReference>
<dbReference type="FunFam" id="2.30.30.30:FF:000001">
    <property type="entry name" value="50S ribosomal protein L2"/>
    <property type="match status" value="1"/>
</dbReference>
<dbReference type="FunFam" id="2.40.50.140:FF:000003">
    <property type="entry name" value="50S ribosomal protein L2"/>
    <property type="match status" value="1"/>
</dbReference>
<dbReference type="FunFam" id="4.10.950.10:FF:000001">
    <property type="entry name" value="50S ribosomal protein L2"/>
    <property type="match status" value="1"/>
</dbReference>
<dbReference type="Gene3D" id="2.30.30.30">
    <property type="match status" value="1"/>
</dbReference>
<dbReference type="Gene3D" id="2.40.50.140">
    <property type="entry name" value="Nucleic acid-binding proteins"/>
    <property type="match status" value="1"/>
</dbReference>
<dbReference type="Gene3D" id="4.10.950.10">
    <property type="entry name" value="Ribosomal protein L2, domain 3"/>
    <property type="match status" value="1"/>
</dbReference>
<dbReference type="HAMAP" id="MF_01320_B">
    <property type="entry name" value="Ribosomal_uL2_B"/>
    <property type="match status" value="1"/>
</dbReference>
<dbReference type="InterPro" id="IPR012340">
    <property type="entry name" value="NA-bd_OB-fold"/>
</dbReference>
<dbReference type="InterPro" id="IPR014722">
    <property type="entry name" value="Rib_uL2_dom2"/>
</dbReference>
<dbReference type="InterPro" id="IPR002171">
    <property type="entry name" value="Ribosomal_uL2"/>
</dbReference>
<dbReference type="InterPro" id="IPR005880">
    <property type="entry name" value="Ribosomal_uL2_bac/org-type"/>
</dbReference>
<dbReference type="InterPro" id="IPR022669">
    <property type="entry name" value="Ribosomal_uL2_C"/>
</dbReference>
<dbReference type="InterPro" id="IPR022671">
    <property type="entry name" value="Ribosomal_uL2_CS"/>
</dbReference>
<dbReference type="InterPro" id="IPR014726">
    <property type="entry name" value="Ribosomal_uL2_dom3"/>
</dbReference>
<dbReference type="InterPro" id="IPR022666">
    <property type="entry name" value="Ribosomal_uL2_RNA-bd_dom"/>
</dbReference>
<dbReference type="InterPro" id="IPR008991">
    <property type="entry name" value="Translation_prot_SH3-like_sf"/>
</dbReference>
<dbReference type="NCBIfam" id="TIGR01171">
    <property type="entry name" value="rplB_bact"/>
    <property type="match status" value="1"/>
</dbReference>
<dbReference type="PANTHER" id="PTHR13691:SF5">
    <property type="entry name" value="LARGE RIBOSOMAL SUBUNIT PROTEIN UL2M"/>
    <property type="match status" value="1"/>
</dbReference>
<dbReference type="PANTHER" id="PTHR13691">
    <property type="entry name" value="RIBOSOMAL PROTEIN L2"/>
    <property type="match status" value="1"/>
</dbReference>
<dbReference type="Pfam" id="PF00181">
    <property type="entry name" value="Ribosomal_L2"/>
    <property type="match status" value="1"/>
</dbReference>
<dbReference type="Pfam" id="PF03947">
    <property type="entry name" value="Ribosomal_L2_C"/>
    <property type="match status" value="1"/>
</dbReference>
<dbReference type="PIRSF" id="PIRSF002158">
    <property type="entry name" value="Ribosomal_L2"/>
    <property type="match status" value="1"/>
</dbReference>
<dbReference type="SMART" id="SM01383">
    <property type="entry name" value="Ribosomal_L2"/>
    <property type="match status" value="1"/>
</dbReference>
<dbReference type="SMART" id="SM01382">
    <property type="entry name" value="Ribosomal_L2_C"/>
    <property type="match status" value="1"/>
</dbReference>
<dbReference type="SUPFAM" id="SSF50249">
    <property type="entry name" value="Nucleic acid-binding proteins"/>
    <property type="match status" value="1"/>
</dbReference>
<dbReference type="SUPFAM" id="SSF50104">
    <property type="entry name" value="Translation proteins SH3-like domain"/>
    <property type="match status" value="1"/>
</dbReference>
<dbReference type="PROSITE" id="PS00467">
    <property type="entry name" value="RIBOSOMAL_L2"/>
    <property type="match status" value="1"/>
</dbReference>
<sequence>MIEIKKAKPTSPGRRHVVSVKNTELHTGKPFKGLVEVKKSKAGRNNTGRITVRHQGGGHKQHYRIVDFKRNKDDITAKVERIEYDPNRSANIALVLYADGERRYIVAPKGLKKDMSVISGEKVDVAVGNCMPLRNIPLGTVIHNIEMKPKKGAQMIRSAGTFAQLVGKDNAYAIIRLRSGEMRRVLLDCRAVIGVVSNSEHNLKSLGKAGAKRWRGIRPTVRGVAMNPVDHPHGGGEGRTSGGRHPVTPWGIPTKGYKTRRNKRSNKLIVQKRK</sequence>
<protein>
    <recommendedName>
        <fullName evidence="1">Large ribosomal subunit protein uL2</fullName>
    </recommendedName>
    <alternativeName>
        <fullName evidence="3">50S ribosomal protein L2</fullName>
    </alternativeName>
</protein>
<accession>Q5NHW5</accession>
<comment type="function">
    <text evidence="1">One of the primary rRNA binding proteins. Required for association of the 30S and 50S subunits to form the 70S ribosome, for tRNA binding and peptide bond formation. It has been suggested to have peptidyltransferase activity; this is somewhat controversial. Makes several contacts with the 16S rRNA in the 70S ribosome.</text>
</comment>
<comment type="subunit">
    <text evidence="1">Part of the 50S ribosomal subunit. Forms a bridge to the 30S subunit in the 70S ribosome.</text>
</comment>
<comment type="similarity">
    <text evidence="1">Belongs to the universal ribosomal protein uL2 family.</text>
</comment>
<proteinExistence type="inferred from homology"/>
<evidence type="ECO:0000255" key="1">
    <source>
        <dbReference type="HAMAP-Rule" id="MF_01320"/>
    </source>
</evidence>
<evidence type="ECO:0000256" key="2">
    <source>
        <dbReference type="SAM" id="MobiDB-lite"/>
    </source>
</evidence>
<evidence type="ECO:0000305" key="3"/>
<feature type="chain" id="PRO_0000237187" description="Large ribosomal subunit protein uL2">
    <location>
        <begin position="1"/>
        <end position="274"/>
    </location>
</feature>
<feature type="region of interest" description="Disordered" evidence="2">
    <location>
        <begin position="224"/>
        <end position="274"/>
    </location>
</feature>
<feature type="compositionally biased region" description="Basic residues" evidence="2">
    <location>
        <begin position="257"/>
        <end position="274"/>
    </location>
</feature>
<keyword id="KW-1185">Reference proteome</keyword>
<keyword id="KW-0687">Ribonucleoprotein</keyword>
<keyword id="KW-0689">Ribosomal protein</keyword>
<keyword id="KW-0694">RNA-binding</keyword>
<keyword id="KW-0699">rRNA-binding</keyword>
<reference key="1">
    <citation type="journal article" date="2005" name="Nat. Genet.">
        <title>The complete genome sequence of Francisella tularensis, the causative agent of tularemia.</title>
        <authorList>
            <person name="Larsson P."/>
            <person name="Oyston P.C.F."/>
            <person name="Chain P."/>
            <person name="Chu M.C."/>
            <person name="Duffield M."/>
            <person name="Fuxelius H.-H."/>
            <person name="Garcia E."/>
            <person name="Haelltorp G."/>
            <person name="Johansson D."/>
            <person name="Isherwood K.E."/>
            <person name="Karp P.D."/>
            <person name="Larsson E."/>
            <person name="Liu Y."/>
            <person name="Michell S."/>
            <person name="Prior J."/>
            <person name="Prior R."/>
            <person name="Malfatti S."/>
            <person name="Sjoestedt A."/>
            <person name="Svensson K."/>
            <person name="Thompson N."/>
            <person name="Vergez L."/>
            <person name="Wagg J.K."/>
            <person name="Wren B.W."/>
            <person name="Lindler L.E."/>
            <person name="Andersson S.G.E."/>
            <person name="Forsman M."/>
            <person name="Titball R.W."/>
        </authorList>
    </citation>
    <scope>NUCLEOTIDE SEQUENCE [LARGE SCALE GENOMIC DNA]</scope>
    <source>
        <strain>SCHU S4 / Schu 4</strain>
    </source>
</reference>
<name>RL2_FRATT</name>
<gene>
    <name evidence="1" type="primary">rplB</name>
    <name type="ordered locus">FTT_0328</name>
</gene>
<organism>
    <name type="scientific">Francisella tularensis subsp. tularensis (strain SCHU S4 / Schu 4)</name>
    <dbReference type="NCBI Taxonomy" id="177416"/>
    <lineage>
        <taxon>Bacteria</taxon>
        <taxon>Pseudomonadati</taxon>
        <taxon>Pseudomonadota</taxon>
        <taxon>Gammaproteobacteria</taxon>
        <taxon>Thiotrichales</taxon>
        <taxon>Francisellaceae</taxon>
        <taxon>Francisella</taxon>
    </lineage>
</organism>